<reference key="1">
    <citation type="journal article" date="1994" name="Curr. Genet.">
        <title>Expression of intron-encoded maturase-like polypeptides in potato chloroplasts.</title>
        <authorList>
            <person name="du Jardin P."/>
            <person name="Portetelle D."/>
            <person name="Harvengt L."/>
            <person name="Dumont M."/>
            <person name="Wathelet B."/>
        </authorList>
    </citation>
    <scope>NUCLEOTIDE SEQUENCE [GENOMIC DNA]</scope>
</reference>
<reference key="2">
    <citation type="journal article" date="2006" name="Plant Cell Rep.">
        <title>The complete chloroplast genome sequences of Solanum tuberosum and comparative analysis with Solanaceae species identified the presence of a 241-bp deletion in cultivated potato chloroplast DNA sequence.</title>
        <authorList>
            <person name="Chung H.-J."/>
            <person name="Jung J.D."/>
            <person name="Park H.-W."/>
            <person name="Kim J.-H."/>
            <person name="Cha H.W."/>
            <person name="Min S.R."/>
            <person name="Jeong W.-J."/>
            <person name="Liu J.R."/>
        </authorList>
    </citation>
    <scope>NUCLEOTIDE SEQUENCE [LARGE SCALE GENOMIC DNA]</scope>
    <source>
        <strain>cv. Desiree</strain>
    </source>
</reference>
<reference key="3">
    <citation type="submission" date="2006-02" db="EMBL/GenBank/DDBJ databases">
        <title>Complete chloroplast genome sequences of Solanum tuberosum cultivar Desiree and comparative analyses with other Solanaceae genomes.</title>
        <authorList>
            <person name="Gargano D."/>
            <person name="Scotti N."/>
            <person name="Vezzi A."/>
            <person name="Bilardi A."/>
            <person name="Valle G."/>
            <person name="Grillo S."/>
            <person name="Cardi T."/>
        </authorList>
    </citation>
    <scope>NUCLEOTIDE SEQUENCE [LARGE SCALE GENOMIC DNA]</scope>
    <source>
        <strain>cv. Desiree</strain>
    </source>
</reference>
<protein>
    <recommendedName>
        <fullName evidence="1">Maturase K</fullName>
    </recommendedName>
    <alternativeName>
        <fullName evidence="1">Intron maturase</fullName>
    </alternativeName>
</protein>
<accession>P32088</accession>
<accession>Q27S69</accession>
<accession>Q2VEJ5</accession>
<gene>
    <name evidence="1" type="primary">matK</name>
    <name type="synonym">ycf14</name>
</gene>
<evidence type="ECO:0000255" key="1">
    <source>
        <dbReference type="HAMAP-Rule" id="MF_01390"/>
    </source>
</evidence>
<evidence type="ECO:0000305" key="2"/>
<feature type="chain" id="PRO_0000143711" description="Maturase K">
    <location>
        <begin position="1"/>
        <end position="509"/>
    </location>
</feature>
<feature type="sequence conflict" description="In Ref. 1; CAA77800." evidence="2" ref="1">
    <original>S</original>
    <variation>T</variation>
    <location>
        <position position="115"/>
    </location>
</feature>
<feature type="sequence conflict" description="In Ref. 1; CAA77800." evidence="2" ref="1">
    <original>D</original>
    <variation>V</variation>
    <location>
        <position position="142"/>
    </location>
</feature>
<geneLocation type="chloroplast"/>
<sequence length="509" mass="60166">MEEIHRYLQPDSSQQHNFLYPLIFQEYIYALAQDHGLNRNRSILLENSGYNNKLSFLIVKRLITRMYQQNHFIISTNDSNKNPFLGCNKSLYSQMISEGFACIVEIPFSIRLISSLSSFEGKKIFKSHNLRSIHSTFPFLEDNFAHLNYVLDILIPYPVHLEILVQTLRYWVKDASSLHLLRFFLHEYCNLNSLITSKKPGYSFSKKNQRFFFFLYNSYVYECESTFVFLRNQSSHLRSTSFGALLERIYFYGKIERLVEVFAKDFQVTLWLFKDPFMHYVRYEGKSILASKGTFPLMNKWKFYLVNFWQCHFSMYFHTGRIHINQLSNHSRDFMGYLSSVRLNHSMVRSQMLENSFLINNPIKKFETLVPIIPLIGSLAKAHFCTVLGHPISKPVWSDLSDSDIIDRFGRICRNLFHYYSGSSKKKTLYRIKYILRLSCARTLARKHKSTVRTFLKRSGSELLEEFLTSEEQVLSLTFPRASSSLWGVYRSRIWYLDIFCINDLANYQ</sequence>
<keyword id="KW-0150">Chloroplast</keyword>
<keyword id="KW-0507">mRNA processing</keyword>
<keyword id="KW-0934">Plastid</keyword>
<keyword id="KW-1185">Reference proteome</keyword>
<keyword id="KW-0694">RNA-binding</keyword>
<keyword id="KW-0819">tRNA processing</keyword>
<organism>
    <name type="scientific">Solanum tuberosum</name>
    <name type="common">Potato</name>
    <dbReference type="NCBI Taxonomy" id="4113"/>
    <lineage>
        <taxon>Eukaryota</taxon>
        <taxon>Viridiplantae</taxon>
        <taxon>Streptophyta</taxon>
        <taxon>Embryophyta</taxon>
        <taxon>Tracheophyta</taxon>
        <taxon>Spermatophyta</taxon>
        <taxon>Magnoliopsida</taxon>
        <taxon>eudicotyledons</taxon>
        <taxon>Gunneridae</taxon>
        <taxon>Pentapetalae</taxon>
        <taxon>asterids</taxon>
        <taxon>lamiids</taxon>
        <taxon>Solanales</taxon>
        <taxon>Solanaceae</taxon>
        <taxon>Solanoideae</taxon>
        <taxon>Solaneae</taxon>
        <taxon>Solanum</taxon>
    </lineage>
</organism>
<comment type="function">
    <text evidence="1">Usually encoded in the trnK tRNA gene intron. Probably assists in splicing its own and other chloroplast group II introns.</text>
</comment>
<comment type="subcellular location">
    <subcellularLocation>
        <location>Plastid</location>
        <location>Chloroplast</location>
    </subcellularLocation>
</comment>
<comment type="similarity">
    <text evidence="1">Belongs to the intron maturase 2 family. MatK subfamily.</text>
</comment>
<name>MATK_SOLTU</name>
<proteinExistence type="inferred from homology"/>
<dbReference type="EMBL" id="Z11741">
    <property type="protein sequence ID" value="CAA77800.1"/>
    <property type="molecule type" value="Genomic_DNA"/>
</dbReference>
<dbReference type="EMBL" id="DQ231562">
    <property type="protein sequence ID" value="ABB90024.1"/>
    <property type="molecule type" value="Genomic_DNA"/>
</dbReference>
<dbReference type="EMBL" id="DQ386163">
    <property type="protein sequence ID" value="ABD47038.1"/>
    <property type="molecule type" value="Genomic_DNA"/>
</dbReference>
<dbReference type="PIR" id="S40613">
    <property type="entry name" value="S40613"/>
</dbReference>
<dbReference type="RefSeq" id="YP_635620.1">
    <property type="nucleotide sequence ID" value="NC_008096.2"/>
</dbReference>
<dbReference type="STRING" id="4113.P32088"/>
<dbReference type="PaxDb" id="4113-PGSC0003DMT400091476"/>
<dbReference type="GeneID" id="4099949"/>
<dbReference type="KEGG" id="sot:4099949"/>
<dbReference type="eggNOG" id="ENOG502QWRZ">
    <property type="taxonomic scope" value="Eukaryota"/>
</dbReference>
<dbReference type="InParanoid" id="P32088"/>
<dbReference type="OrthoDB" id="1886907at2759"/>
<dbReference type="Proteomes" id="UP000011115">
    <property type="component" value="Unassembled WGS sequence"/>
</dbReference>
<dbReference type="GO" id="GO:0009507">
    <property type="term" value="C:chloroplast"/>
    <property type="evidence" value="ECO:0007669"/>
    <property type="project" value="UniProtKB-SubCell"/>
</dbReference>
<dbReference type="GO" id="GO:0003723">
    <property type="term" value="F:RNA binding"/>
    <property type="evidence" value="ECO:0007669"/>
    <property type="project" value="UniProtKB-KW"/>
</dbReference>
<dbReference type="GO" id="GO:0006397">
    <property type="term" value="P:mRNA processing"/>
    <property type="evidence" value="ECO:0007669"/>
    <property type="project" value="UniProtKB-KW"/>
</dbReference>
<dbReference type="GO" id="GO:0008380">
    <property type="term" value="P:RNA splicing"/>
    <property type="evidence" value="ECO:0007669"/>
    <property type="project" value="UniProtKB-UniRule"/>
</dbReference>
<dbReference type="GO" id="GO:0008033">
    <property type="term" value="P:tRNA processing"/>
    <property type="evidence" value="ECO:0007669"/>
    <property type="project" value="UniProtKB-KW"/>
</dbReference>
<dbReference type="HAMAP" id="MF_01390">
    <property type="entry name" value="MatK"/>
    <property type="match status" value="1"/>
</dbReference>
<dbReference type="InterPro" id="IPR024937">
    <property type="entry name" value="Domain_X"/>
</dbReference>
<dbReference type="InterPro" id="IPR002866">
    <property type="entry name" value="Maturase_MatK"/>
</dbReference>
<dbReference type="InterPro" id="IPR024942">
    <property type="entry name" value="Maturase_MatK_N"/>
</dbReference>
<dbReference type="PANTHER" id="PTHR34811">
    <property type="entry name" value="MATURASE K"/>
    <property type="match status" value="1"/>
</dbReference>
<dbReference type="PANTHER" id="PTHR34811:SF1">
    <property type="entry name" value="MATURASE K"/>
    <property type="match status" value="1"/>
</dbReference>
<dbReference type="Pfam" id="PF01348">
    <property type="entry name" value="Intron_maturas2"/>
    <property type="match status" value="1"/>
</dbReference>
<dbReference type="Pfam" id="PF01824">
    <property type="entry name" value="MatK_N"/>
    <property type="match status" value="1"/>
</dbReference>